<protein>
    <recommendedName>
        <fullName evidence="2">NADH-quinone oxidoreductase subunit C/D</fullName>
        <ecNumber evidence="2">7.1.1.-</ecNumber>
    </recommendedName>
    <alternativeName>
        <fullName evidence="2">NADH dehydrogenase I subunit C/D</fullName>
    </alternativeName>
    <alternativeName>
        <fullName evidence="2">NDH-1 subunit C/D</fullName>
    </alternativeName>
</protein>
<reference key="1">
    <citation type="journal article" date="2007" name="PLoS ONE">
        <title>The complete genome sequence and analysis of the Epsilonproteobacterium Arcobacter butzleri.</title>
        <authorList>
            <person name="Miller W.G."/>
            <person name="Parker C.T."/>
            <person name="Rubenfield M."/>
            <person name="Mendz G.L."/>
            <person name="Woesten M.M.S.M."/>
            <person name="Ussery D.W."/>
            <person name="Stolz J.F."/>
            <person name="Binnewies T.T."/>
            <person name="Hallin P.F."/>
            <person name="Wang G."/>
            <person name="Malek J.A."/>
            <person name="Rogosin A."/>
            <person name="Stanker L.H."/>
            <person name="Mandrell R.E."/>
        </authorList>
    </citation>
    <scope>NUCLEOTIDE SEQUENCE [LARGE SCALE GENOMIC DNA]</scope>
    <source>
        <strain>RM4018</strain>
    </source>
</reference>
<proteinExistence type="inferred from homology"/>
<sequence>MLNCDMLIDSKELKSTISKLKNEDNYTILLDVTAVDYLKFPDVTPSRFAVIYILRDSTFTKEITIKSYVDDNTLEIDSLYDLYESADWAERETFDQYGIKFVGHPNLKRVLNHHQFIGHPLRKDYKITKGQICTETEDLMDEMVPKLKSKGYKKEEIDDLMLLNVGPSHPASHGTIRNFVAMEGETITACVTEIGYLHRGFEKACEHHTYSQIIPYTDRLNYCSAILNNIGYSKAVEEMLGIEITPRAKMIRVIIGELSRILDHLVCNAANMVDLGGLTNFWYLFSPRDMAYDLLSKLTGARLTNTYTRIGGLEFDLYDGFDKDLEEVLKAVEKGVEDALSLIAHNRIYHDRTQDVGVIKADFALRNGISGPNLRAAGVACDLRKDKPYYGYENFDFDVVIGSHGDVYDRMMCRFEEMRQSTKIIRQAMKNLPDGAINVYAPGVILPSKKDVYGNIEGLMNQFKLTFEGIQVPKGEYYSFSEAANGELGFFIVSDGSGRPYKVKCRPPCFYSLAAYSKIVEGTMLADAVVTMASMNFIAGEFDR</sequence>
<comment type="function">
    <text evidence="2">NDH-1 shuttles electrons from NADH, via FMN and iron-sulfur (Fe-S) centers, to quinones in the respiratory chain. The immediate electron acceptor for the enzyme in this species is believed to be ubiquinone. Couples the redox reaction to proton translocation (for every two electrons transferred, four hydrogen ions are translocated across the cytoplasmic membrane), and thus conserves the redox energy in a proton gradient.</text>
</comment>
<comment type="catalytic activity">
    <reaction evidence="2">
        <text>a quinone + NADH + 5 H(+)(in) = a quinol + NAD(+) + 4 H(+)(out)</text>
        <dbReference type="Rhea" id="RHEA:57888"/>
        <dbReference type="ChEBI" id="CHEBI:15378"/>
        <dbReference type="ChEBI" id="CHEBI:24646"/>
        <dbReference type="ChEBI" id="CHEBI:57540"/>
        <dbReference type="ChEBI" id="CHEBI:57945"/>
        <dbReference type="ChEBI" id="CHEBI:132124"/>
    </reaction>
</comment>
<comment type="subunit">
    <text evidence="2">NDH-1 is composed of 13 different subunits. Subunits NuoB, CD, E, F, and G constitute the peripheral sector of the complex.</text>
</comment>
<comment type="subcellular location">
    <subcellularLocation>
        <location evidence="2">Cell inner membrane</location>
        <topology evidence="2">Peripheral membrane protein</topology>
        <orientation evidence="1">Cytoplasmic side</orientation>
    </subcellularLocation>
</comment>
<comment type="similarity">
    <text evidence="2">In the N-terminal section; belongs to the complex I 30 kDa subunit family.</text>
</comment>
<comment type="similarity">
    <text evidence="2">In the C-terminal section; belongs to the complex I 49 kDa subunit family.</text>
</comment>
<keyword id="KW-0997">Cell inner membrane</keyword>
<keyword id="KW-1003">Cell membrane</keyword>
<keyword id="KW-0472">Membrane</keyword>
<keyword id="KW-0511">Multifunctional enzyme</keyword>
<keyword id="KW-0520">NAD</keyword>
<keyword id="KW-0874">Quinone</keyword>
<keyword id="KW-1185">Reference proteome</keyword>
<keyword id="KW-1278">Translocase</keyword>
<keyword id="KW-0813">Transport</keyword>
<keyword id="KW-0830">Ubiquinone</keyword>
<evidence type="ECO:0000250" key="1"/>
<evidence type="ECO:0000255" key="2">
    <source>
        <dbReference type="HAMAP-Rule" id="MF_01397"/>
    </source>
</evidence>
<dbReference type="EC" id="7.1.1.-" evidence="2"/>
<dbReference type="EMBL" id="CP000361">
    <property type="protein sequence ID" value="ABV66588.1"/>
    <property type="molecule type" value="Genomic_DNA"/>
</dbReference>
<dbReference type="RefSeq" id="WP_012012152.1">
    <property type="nucleotide sequence ID" value="NC_009850.1"/>
</dbReference>
<dbReference type="SMR" id="A8ERL4"/>
<dbReference type="STRING" id="367737.Abu_0313"/>
<dbReference type="GeneID" id="24303917"/>
<dbReference type="KEGG" id="abu:Abu_0313"/>
<dbReference type="eggNOG" id="COG0649">
    <property type="taxonomic scope" value="Bacteria"/>
</dbReference>
<dbReference type="eggNOG" id="COG0852">
    <property type="taxonomic scope" value="Bacteria"/>
</dbReference>
<dbReference type="HOGENOM" id="CLU_015134_3_2_7"/>
<dbReference type="Proteomes" id="UP000001136">
    <property type="component" value="Chromosome"/>
</dbReference>
<dbReference type="GO" id="GO:0030964">
    <property type="term" value="C:NADH dehydrogenase complex"/>
    <property type="evidence" value="ECO:0007669"/>
    <property type="project" value="InterPro"/>
</dbReference>
<dbReference type="GO" id="GO:0005886">
    <property type="term" value="C:plasma membrane"/>
    <property type="evidence" value="ECO:0007669"/>
    <property type="project" value="UniProtKB-SubCell"/>
</dbReference>
<dbReference type="GO" id="GO:0051287">
    <property type="term" value="F:NAD binding"/>
    <property type="evidence" value="ECO:0007669"/>
    <property type="project" value="InterPro"/>
</dbReference>
<dbReference type="GO" id="GO:0008137">
    <property type="term" value="F:NADH dehydrogenase (ubiquinone) activity"/>
    <property type="evidence" value="ECO:0007669"/>
    <property type="project" value="InterPro"/>
</dbReference>
<dbReference type="GO" id="GO:0050136">
    <property type="term" value="F:NADH:ubiquinone reductase (non-electrogenic) activity"/>
    <property type="evidence" value="ECO:0007669"/>
    <property type="project" value="InterPro"/>
</dbReference>
<dbReference type="GO" id="GO:0048038">
    <property type="term" value="F:quinone binding"/>
    <property type="evidence" value="ECO:0007669"/>
    <property type="project" value="UniProtKB-KW"/>
</dbReference>
<dbReference type="Gene3D" id="1.10.645.10">
    <property type="entry name" value="Cytochrome-c3 Hydrogenase, chain B"/>
    <property type="match status" value="1"/>
</dbReference>
<dbReference type="Gene3D" id="3.30.460.80">
    <property type="entry name" value="NADH:ubiquinone oxidoreductase, 30kDa subunit"/>
    <property type="match status" value="1"/>
</dbReference>
<dbReference type="HAMAP" id="MF_01397">
    <property type="entry name" value="NDH1_NuoCD_2"/>
    <property type="match status" value="1"/>
</dbReference>
<dbReference type="HAMAP" id="MF_01358">
    <property type="entry name" value="NDH1_NuoD"/>
    <property type="match status" value="1"/>
</dbReference>
<dbReference type="InterPro" id="IPR001135">
    <property type="entry name" value="NADH_Q_OxRdtase_suD"/>
</dbReference>
<dbReference type="InterPro" id="IPR037232">
    <property type="entry name" value="NADH_quin_OxRdtase_su_C/D-like"/>
</dbReference>
<dbReference type="InterPro" id="IPR001268">
    <property type="entry name" value="NADH_UbQ_OxRdtase_30kDa_su"/>
</dbReference>
<dbReference type="InterPro" id="IPR026662">
    <property type="entry name" value="NDH-1_subunit_CD"/>
</dbReference>
<dbReference type="InterPro" id="IPR022885">
    <property type="entry name" value="NDH1_su_D/H"/>
</dbReference>
<dbReference type="InterPro" id="IPR029014">
    <property type="entry name" value="NiFe-Hase_large"/>
</dbReference>
<dbReference type="NCBIfam" id="NF004739">
    <property type="entry name" value="PRK06075.1"/>
    <property type="match status" value="1"/>
</dbReference>
<dbReference type="PANTHER" id="PTHR11993:SF10">
    <property type="entry name" value="NADH DEHYDROGENASE [UBIQUINONE] IRON-SULFUR PROTEIN 2, MITOCHONDRIAL"/>
    <property type="match status" value="1"/>
</dbReference>
<dbReference type="PANTHER" id="PTHR11993">
    <property type="entry name" value="NADH-UBIQUINONE OXIDOREDUCTASE 49 KDA SUBUNIT"/>
    <property type="match status" value="1"/>
</dbReference>
<dbReference type="Pfam" id="PF00329">
    <property type="entry name" value="Complex1_30kDa"/>
    <property type="match status" value="1"/>
</dbReference>
<dbReference type="Pfam" id="PF00346">
    <property type="entry name" value="Complex1_49kDa"/>
    <property type="match status" value="1"/>
</dbReference>
<dbReference type="SUPFAM" id="SSF56762">
    <property type="entry name" value="HydB/Nqo4-like"/>
    <property type="match status" value="1"/>
</dbReference>
<dbReference type="SUPFAM" id="SSF143243">
    <property type="entry name" value="Nqo5-like"/>
    <property type="match status" value="1"/>
</dbReference>
<gene>
    <name evidence="2" type="primary">nuoC</name>
    <name type="synonym">nuoCD</name>
    <name type="synonym">nuoD</name>
    <name type="ordered locus">Abu_0313</name>
</gene>
<name>NUOCD_ALIB4</name>
<feature type="chain" id="PRO_0000358615" description="NADH-quinone oxidoreductase subunit C/D">
    <location>
        <begin position="1"/>
        <end position="544"/>
    </location>
</feature>
<feature type="region of interest" description="NADH dehydrogenase I subunit C" evidence="2">
    <location>
        <begin position="1"/>
        <end position="138"/>
    </location>
</feature>
<feature type="region of interest" description="NADH dehydrogenase I subunit D" evidence="2">
    <location>
        <begin position="161"/>
        <end position="544"/>
    </location>
</feature>
<organism>
    <name type="scientific">Aliarcobacter butzleri (strain RM4018)</name>
    <name type="common">Arcobacter butzleri</name>
    <dbReference type="NCBI Taxonomy" id="367737"/>
    <lineage>
        <taxon>Bacteria</taxon>
        <taxon>Pseudomonadati</taxon>
        <taxon>Campylobacterota</taxon>
        <taxon>Epsilonproteobacteria</taxon>
        <taxon>Campylobacterales</taxon>
        <taxon>Arcobacteraceae</taxon>
        <taxon>Aliarcobacter</taxon>
    </lineage>
</organism>
<accession>A8ERL4</accession>